<dbReference type="EMBL" id="AE000666">
    <property type="protein sequence ID" value="AAB85635.1"/>
    <property type="molecule type" value="Genomic_DNA"/>
</dbReference>
<dbReference type="PIR" id="F69019">
    <property type="entry name" value="F69019"/>
</dbReference>
<dbReference type="RefSeq" id="WP_010876770.1">
    <property type="nucleotide sequence ID" value="NC_000916.1"/>
</dbReference>
<dbReference type="SMR" id="O27214"/>
<dbReference type="FunCoup" id="O27214">
    <property type="interactions" value="89"/>
</dbReference>
<dbReference type="STRING" id="187420.MTH_1146"/>
<dbReference type="PaxDb" id="187420-MTH_1146"/>
<dbReference type="EnsemblBacteria" id="AAB85635">
    <property type="protein sequence ID" value="AAB85635"/>
    <property type="gene ID" value="MTH_1146"/>
</dbReference>
<dbReference type="GeneID" id="1471554"/>
<dbReference type="KEGG" id="mth:MTH_1146"/>
<dbReference type="HOGENOM" id="CLU_037423_2_0_2"/>
<dbReference type="InParanoid" id="O27214"/>
<dbReference type="Proteomes" id="UP000005223">
    <property type="component" value="Chromosome"/>
</dbReference>
<dbReference type="GO" id="GO:0005737">
    <property type="term" value="C:cytoplasm"/>
    <property type="evidence" value="ECO:0007669"/>
    <property type="project" value="TreeGrafter"/>
</dbReference>
<dbReference type="GO" id="GO:0046872">
    <property type="term" value="F:metal ion binding"/>
    <property type="evidence" value="ECO:0007669"/>
    <property type="project" value="UniProtKB-KW"/>
</dbReference>
<dbReference type="Gene3D" id="3.40.1390.30">
    <property type="entry name" value="NIF3 (NGG1p interacting factor 3)-like"/>
    <property type="match status" value="1"/>
</dbReference>
<dbReference type="InterPro" id="IPR002678">
    <property type="entry name" value="DUF34/NIF3"/>
</dbReference>
<dbReference type="InterPro" id="IPR036069">
    <property type="entry name" value="DUF34/NIF3_sf"/>
</dbReference>
<dbReference type="NCBIfam" id="TIGR00486">
    <property type="entry name" value="YbgI_SA1388"/>
    <property type="match status" value="1"/>
</dbReference>
<dbReference type="PANTHER" id="PTHR13799:SF14">
    <property type="entry name" value="GTP CYCLOHYDROLASE 1 TYPE 2 HOMOLOG"/>
    <property type="match status" value="1"/>
</dbReference>
<dbReference type="PANTHER" id="PTHR13799">
    <property type="entry name" value="NGG1 INTERACTING FACTOR 3"/>
    <property type="match status" value="1"/>
</dbReference>
<dbReference type="Pfam" id="PF01784">
    <property type="entry name" value="DUF34_NIF3"/>
    <property type="match status" value="1"/>
</dbReference>
<dbReference type="SUPFAM" id="SSF102705">
    <property type="entry name" value="NIF3 (NGG1p interacting factor 3)-like"/>
    <property type="match status" value="1"/>
</dbReference>
<sequence length="234" mass="25679">MITIRIDSLIELMDRVAPPELALPGDRIGYHGPEIEVEAVLVLMDYLEDVAVDGYDLLVLHHPPEVEPPIPYLTVHSNWDVADGGACDALADALGLDVESFLDPDTGVDRICRADLSLEELLERTGVLNPETLRVVNPREYVDRVAVVSGFGLSDKSLIMRAWSEGVSAYLSGDLTHGPAILGRNMDLTLIDAGHHATEMPGLHRLREVIEDFGVMAELLDTGTPWSEYRAAYI</sequence>
<reference key="1">
    <citation type="journal article" date="1997" name="J. Bacteriol.">
        <title>Complete genome sequence of Methanobacterium thermoautotrophicum deltaH: functional analysis and comparative genomics.</title>
        <authorList>
            <person name="Smith D.R."/>
            <person name="Doucette-Stamm L.A."/>
            <person name="Deloughery C."/>
            <person name="Lee H.-M."/>
            <person name="Dubois J."/>
            <person name="Aldredge T."/>
            <person name="Bashirzadeh R."/>
            <person name="Blakely D."/>
            <person name="Cook R."/>
            <person name="Gilbert K."/>
            <person name="Harrison D."/>
            <person name="Hoang L."/>
            <person name="Keagle P."/>
            <person name="Lumm W."/>
            <person name="Pothier B."/>
            <person name="Qiu D."/>
            <person name="Spadafora R."/>
            <person name="Vicare R."/>
            <person name="Wang Y."/>
            <person name="Wierzbowski J."/>
            <person name="Gibson R."/>
            <person name="Jiwani N."/>
            <person name="Caruso A."/>
            <person name="Bush D."/>
            <person name="Safer H."/>
            <person name="Patwell D."/>
            <person name="Prabhakar S."/>
            <person name="McDougall S."/>
            <person name="Shimer G."/>
            <person name="Goyal A."/>
            <person name="Pietrovski S."/>
            <person name="Church G.M."/>
            <person name="Daniels C.J."/>
            <person name="Mao J.-I."/>
            <person name="Rice P."/>
            <person name="Noelling J."/>
            <person name="Reeve J.N."/>
        </authorList>
    </citation>
    <scope>NUCLEOTIDE SEQUENCE [LARGE SCALE GENOMIC DNA]</scope>
    <source>
        <strain>ATCC 29096 / DSM 1053 / JCM 10044 / NBRC 100330 / Delta H</strain>
    </source>
</reference>
<evidence type="ECO:0000250" key="1">
    <source>
        <dbReference type="UniProtKB" id="P0AFP6"/>
    </source>
</evidence>
<evidence type="ECO:0000250" key="2">
    <source>
        <dbReference type="UniProtKB" id="Q58337"/>
    </source>
</evidence>
<evidence type="ECO:0000305" key="3"/>
<organism>
    <name type="scientific">Methanothermobacter thermautotrophicus (strain ATCC 29096 / DSM 1053 / JCM 10044 / NBRC 100330 / Delta H)</name>
    <name type="common">Methanobacterium thermoautotrophicum</name>
    <dbReference type="NCBI Taxonomy" id="187420"/>
    <lineage>
        <taxon>Archaea</taxon>
        <taxon>Methanobacteriati</taxon>
        <taxon>Methanobacteriota</taxon>
        <taxon>Methanomada group</taxon>
        <taxon>Methanobacteria</taxon>
        <taxon>Methanobacteriales</taxon>
        <taxon>Methanobacteriaceae</taxon>
        <taxon>Methanothermobacter</taxon>
    </lineage>
</organism>
<name>GCH1L_METTH</name>
<proteinExistence type="inferred from homology"/>
<accession>O27214</accession>
<protein>
    <recommendedName>
        <fullName>GTP cyclohydrolase 1 type 2 homolog</fullName>
    </recommendedName>
</protein>
<gene>
    <name type="ordered locus">MTH_1146</name>
</gene>
<feature type="chain" id="PRO_0000147349" description="GTP cyclohydrolase 1 type 2 homolog">
    <location>
        <begin position="1"/>
        <end position="234"/>
    </location>
</feature>
<feature type="binding site" evidence="1">
    <location>
        <position position="61"/>
    </location>
    <ligand>
        <name>a divalent metal cation</name>
        <dbReference type="ChEBI" id="CHEBI:60240"/>
        <label>1</label>
    </ligand>
</feature>
<feature type="binding site" evidence="1">
    <location>
        <position position="62"/>
    </location>
    <ligand>
        <name>a divalent metal cation</name>
        <dbReference type="ChEBI" id="CHEBI:60240"/>
        <label>2</label>
    </ligand>
</feature>
<feature type="binding site" evidence="1">
    <location>
        <position position="80"/>
    </location>
    <ligand>
        <name>a divalent metal cation</name>
        <dbReference type="ChEBI" id="CHEBI:60240"/>
        <label>1</label>
    </ligand>
</feature>
<feature type="binding site" evidence="1">
    <location>
        <position position="195"/>
    </location>
    <ligand>
        <name>a divalent metal cation</name>
        <dbReference type="ChEBI" id="CHEBI:60240"/>
        <label>2</label>
    </ligand>
</feature>
<feature type="binding site" evidence="1">
    <location>
        <position position="199"/>
    </location>
    <ligand>
        <name>a divalent metal cation</name>
        <dbReference type="ChEBI" id="CHEBI:60240"/>
        <label>1</label>
    </ligand>
</feature>
<feature type="binding site" evidence="1">
    <location>
        <position position="199"/>
    </location>
    <ligand>
        <name>a divalent metal cation</name>
        <dbReference type="ChEBI" id="CHEBI:60240"/>
        <label>2</label>
    </ligand>
</feature>
<comment type="subunit">
    <text evidence="2">Homohexamer.</text>
</comment>
<comment type="similarity">
    <text evidence="3">Belongs to the GTP cyclohydrolase I type 2/NIF3 family.</text>
</comment>
<keyword id="KW-0479">Metal-binding</keyword>
<keyword id="KW-1185">Reference proteome</keyword>